<organism>
    <name type="scientific">Francisella tularensis subsp. tularensis (strain FSC 198)</name>
    <dbReference type="NCBI Taxonomy" id="393115"/>
    <lineage>
        <taxon>Bacteria</taxon>
        <taxon>Pseudomonadati</taxon>
        <taxon>Pseudomonadota</taxon>
        <taxon>Gammaproteobacteria</taxon>
        <taxon>Thiotrichales</taxon>
        <taxon>Francisellaceae</taxon>
        <taxon>Francisella</taxon>
    </lineage>
</organism>
<gene>
    <name evidence="1" type="primary">katG</name>
    <name type="ordered locus">FTF0721c</name>
</gene>
<reference key="1">
    <citation type="journal article" date="2007" name="PLoS ONE">
        <title>Genome sequencing shows that European isolates of Francisella tularensis subspecies tularensis are almost identical to US laboratory strain Schu S4.</title>
        <authorList>
            <person name="Chaudhuri R.R."/>
            <person name="Ren C.-P."/>
            <person name="Desmond L."/>
            <person name="Vincent G.A."/>
            <person name="Silman N.J."/>
            <person name="Brehm J.K."/>
            <person name="Elmore M.J."/>
            <person name="Hudson M.J."/>
            <person name="Forsman M."/>
            <person name="Isherwood K.E."/>
            <person name="Gurycova D."/>
            <person name="Minton N.P."/>
            <person name="Titball R.W."/>
            <person name="Pallen M.J."/>
            <person name="Vipond R."/>
        </authorList>
    </citation>
    <scope>NUCLEOTIDE SEQUENCE [LARGE SCALE GENOMIC DNA]</scope>
    <source>
        <strain>FSC 198</strain>
    </source>
</reference>
<sequence>MLKKIVTALGMSGMLLASSNAIAEDTTTKNDNLSPQSVDLSPLRNLNKLDSPMDKDYNYHQAFKKLDTEQLKKDMQDLLTQSQDWWPADFGNYGPFFIRLSWHDAGTYRIYDGRGGANRGQQRFSPLNSWPDNVNLDKARQLLWPIKQKYGDAVSWSDLIVLAGTVSLESMGMKPIGFAFGREDDWQGDDTNWGLSPEEIMSSNVRDGKLAPAYAATQMGLIYVNPEGPDGKPDIKGAASEIRQAFRAMGMTDKETVALIAGGHTFGKTHGAVPEDKVKQAIGPAPDKAPIEQQGLGWHNSYGTGNGDDTMGSGLEGSWTSTPTFWNHDFLHNLYNLDWKKTLSPAGAHQWTPTNAKPENMVPDAHKPGVKHKPIMFTTDLALKEDDGFNKYTQEFYNNPEEFKEEFAKAWFKLTHRDMGPKSRYIGPWIPEQNFIWQDPVPAADYKQVSTQDIAQLEQDIINSGLTNQQLIKTAWDSASTYRKTDYRGGSNGARIALAPEKDWQMNEPAKLEVVLTKLKEIQTNFNNSKTDGTKVSLADLIVLGGNVGVEQAAKQAGYNIQMPFVPGRTDATQAQTDIESFNYLKTKSDGFINYTDGSVSADKLPQTLVEKASMLDLNIPEMTVLVGGMRALDVNYDNSQEGVLTTTPGQLNNSFFVNLLDMSTQWKKSDKKDGEYIGIDRKTGKQKWTASPVDLIFGSNSELKAVAQVYAENGNEQKFVNDFAKAWHKVMMLGRFDVQQ</sequence>
<feature type="signal peptide" evidence="1">
    <location>
        <begin position="1"/>
        <end position="23"/>
    </location>
</feature>
<feature type="chain" id="PRO_0000354795" description="Catalase-peroxidase">
    <location>
        <begin position="24"/>
        <end position="741"/>
    </location>
</feature>
<feature type="active site" description="Proton acceptor" evidence="1">
    <location>
        <position position="103"/>
    </location>
</feature>
<feature type="binding site" description="axial binding residue" evidence="1">
    <location>
        <position position="264"/>
    </location>
    <ligand>
        <name>heme b</name>
        <dbReference type="ChEBI" id="CHEBI:60344"/>
    </ligand>
    <ligandPart>
        <name>Fe</name>
        <dbReference type="ChEBI" id="CHEBI:18248"/>
    </ligandPart>
</feature>
<feature type="site" description="Transition state stabilizer" evidence="1">
    <location>
        <position position="99"/>
    </location>
</feature>
<feature type="cross-link" description="Tryptophyl-tyrosyl-methioninium (Trp-Tyr) (with M-249)" evidence="1">
    <location>
        <begin position="102"/>
        <end position="223"/>
    </location>
</feature>
<feature type="cross-link" description="Tryptophyl-tyrosyl-methioninium (Tyr-Met) (with W-102)" evidence="1">
    <location>
        <begin position="223"/>
        <end position="249"/>
    </location>
</feature>
<protein>
    <recommendedName>
        <fullName evidence="1">Catalase-peroxidase</fullName>
        <shortName evidence="1">CP</shortName>
        <ecNumber evidence="1">1.11.1.21</ecNumber>
    </recommendedName>
    <alternativeName>
        <fullName evidence="1">Peroxidase/catalase</fullName>
    </alternativeName>
</protein>
<evidence type="ECO:0000255" key="1">
    <source>
        <dbReference type="HAMAP-Rule" id="MF_01961"/>
    </source>
</evidence>
<name>KATG_FRAT1</name>
<proteinExistence type="inferred from homology"/>
<dbReference type="EC" id="1.11.1.21" evidence="1"/>
<dbReference type="EMBL" id="AM286280">
    <property type="protein sequence ID" value="CAL08737.1"/>
    <property type="molecule type" value="Genomic_DNA"/>
</dbReference>
<dbReference type="RefSeq" id="WP_003020536.1">
    <property type="nucleotide sequence ID" value="NC_008245.1"/>
</dbReference>
<dbReference type="SMR" id="Q14IA9"/>
<dbReference type="KEGG" id="ftf:FTF0721c"/>
<dbReference type="HOGENOM" id="CLU_025424_2_0_6"/>
<dbReference type="GO" id="GO:0005829">
    <property type="term" value="C:cytosol"/>
    <property type="evidence" value="ECO:0007669"/>
    <property type="project" value="TreeGrafter"/>
</dbReference>
<dbReference type="GO" id="GO:0004096">
    <property type="term" value="F:catalase activity"/>
    <property type="evidence" value="ECO:0007669"/>
    <property type="project" value="UniProtKB-UniRule"/>
</dbReference>
<dbReference type="GO" id="GO:0020037">
    <property type="term" value="F:heme binding"/>
    <property type="evidence" value="ECO:0007669"/>
    <property type="project" value="InterPro"/>
</dbReference>
<dbReference type="GO" id="GO:0046872">
    <property type="term" value="F:metal ion binding"/>
    <property type="evidence" value="ECO:0007669"/>
    <property type="project" value="UniProtKB-KW"/>
</dbReference>
<dbReference type="GO" id="GO:0070301">
    <property type="term" value="P:cellular response to hydrogen peroxide"/>
    <property type="evidence" value="ECO:0007669"/>
    <property type="project" value="TreeGrafter"/>
</dbReference>
<dbReference type="GO" id="GO:0042744">
    <property type="term" value="P:hydrogen peroxide catabolic process"/>
    <property type="evidence" value="ECO:0007669"/>
    <property type="project" value="UniProtKB-KW"/>
</dbReference>
<dbReference type="CDD" id="cd00649">
    <property type="entry name" value="catalase_peroxidase_1"/>
    <property type="match status" value="1"/>
</dbReference>
<dbReference type="CDD" id="cd08200">
    <property type="entry name" value="catalase_peroxidase_2"/>
    <property type="match status" value="1"/>
</dbReference>
<dbReference type="Gene3D" id="1.10.520.10">
    <property type="match status" value="2"/>
</dbReference>
<dbReference type="Gene3D" id="1.10.420.10">
    <property type="entry name" value="Peroxidase, domain 2"/>
    <property type="match status" value="2"/>
</dbReference>
<dbReference type="HAMAP" id="MF_01961">
    <property type="entry name" value="Catal_peroxid"/>
    <property type="match status" value="1"/>
</dbReference>
<dbReference type="InterPro" id="IPR000763">
    <property type="entry name" value="Catalase_peroxidase"/>
</dbReference>
<dbReference type="InterPro" id="IPR002016">
    <property type="entry name" value="Haem_peroxidase"/>
</dbReference>
<dbReference type="InterPro" id="IPR010255">
    <property type="entry name" value="Haem_peroxidase_sf"/>
</dbReference>
<dbReference type="InterPro" id="IPR019794">
    <property type="entry name" value="Peroxidases_AS"/>
</dbReference>
<dbReference type="InterPro" id="IPR019793">
    <property type="entry name" value="Peroxidases_heam-ligand_BS"/>
</dbReference>
<dbReference type="NCBIfam" id="TIGR00198">
    <property type="entry name" value="cat_per_HPI"/>
    <property type="match status" value="1"/>
</dbReference>
<dbReference type="NCBIfam" id="NF011635">
    <property type="entry name" value="PRK15061.1"/>
    <property type="match status" value="1"/>
</dbReference>
<dbReference type="PANTHER" id="PTHR30555:SF0">
    <property type="entry name" value="CATALASE-PEROXIDASE"/>
    <property type="match status" value="1"/>
</dbReference>
<dbReference type="PANTHER" id="PTHR30555">
    <property type="entry name" value="HYDROPEROXIDASE I, BIFUNCTIONAL CATALASE-PEROXIDASE"/>
    <property type="match status" value="1"/>
</dbReference>
<dbReference type="Pfam" id="PF00141">
    <property type="entry name" value="peroxidase"/>
    <property type="match status" value="2"/>
</dbReference>
<dbReference type="PRINTS" id="PR00460">
    <property type="entry name" value="BPEROXIDASE"/>
</dbReference>
<dbReference type="PRINTS" id="PR00458">
    <property type="entry name" value="PEROXIDASE"/>
</dbReference>
<dbReference type="SUPFAM" id="SSF48113">
    <property type="entry name" value="Heme-dependent peroxidases"/>
    <property type="match status" value="2"/>
</dbReference>
<dbReference type="PROSITE" id="PS00435">
    <property type="entry name" value="PEROXIDASE_1"/>
    <property type="match status" value="1"/>
</dbReference>
<dbReference type="PROSITE" id="PS00436">
    <property type="entry name" value="PEROXIDASE_2"/>
    <property type="match status" value="1"/>
</dbReference>
<dbReference type="PROSITE" id="PS50873">
    <property type="entry name" value="PEROXIDASE_4"/>
    <property type="match status" value="1"/>
</dbReference>
<comment type="function">
    <text evidence="1">Bifunctional enzyme with both catalase and broad-spectrum peroxidase activity.</text>
</comment>
<comment type="catalytic activity">
    <reaction evidence="1">
        <text>H2O2 + AH2 = A + 2 H2O</text>
        <dbReference type="Rhea" id="RHEA:30275"/>
        <dbReference type="ChEBI" id="CHEBI:13193"/>
        <dbReference type="ChEBI" id="CHEBI:15377"/>
        <dbReference type="ChEBI" id="CHEBI:16240"/>
        <dbReference type="ChEBI" id="CHEBI:17499"/>
        <dbReference type="EC" id="1.11.1.21"/>
    </reaction>
</comment>
<comment type="catalytic activity">
    <reaction evidence="1">
        <text>2 H2O2 = O2 + 2 H2O</text>
        <dbReference type="Rhea" id="RHEA:20309"/>
        <dbReference type="ChEBI" id="CHEBI:15377"/>
        <dbReference type="ChEBI" id="CHEBI:15379"/>
        <dbReference type="ChEBI" id="CHEBI:16240"/>
        <dbReference type="EC" id="1.11.1.21"/>
    </reaction>
</comment>
<comment type="cofactor">
    <cofactor evidence="1">
        <name>heme b</name>
        <dbReference type="ChEBI" id="CHEBI:60344"/>
    </cofactor>
    <text evidence="1">Binds 1 heme b (iron(II)-protoporphyrin IX) group per dimer.</text>
</comment>
<comment type="subunit">
    <text evidence="1">Homodimer or homotetramer.</text>
</comment>
<comment type="PTM">
    <text evidence="1">Formation of the three residue Trp-Tyr-Met cross-link is important for the catalase, but not the peroxidase activity of the enzyme.</text>
</comment>
<comment type="similarity">
    <text evidence="1">Belongs to the peroxidase family. Peroxidase/catalase subfamily.</text>
</comment>
<keyword id="KW-0349">Heme</keyword>
<keyword id="KW-0376">Hydrogen peroxide</keyword>
<keyword id="KW-0408">Iron</keyword>
<keyword id="KW-0479">Metal-binding</keyword>
<keyword id="KW-0560">Oxidoreductase</keyword>
<keyword id="KW-0575">Peroxidase</keyword>
<keyword id="KW-0732">Signal</keyword>
<accession>Q14IA9</accession>